<sequence length="777" mass="86083">MAAAGLVAVAAAAEYSGTVASGGNLPGVHCGPSSGAGPGFGPGSWSRSLDRALEEAAVTGVLSLSGRKLREFPRGAANHDLTDTTRADLSRNRLSEIPIEACHFVSLENLNLYQNCIRYIPEAILNLQALTFLNISRNQLSTLPVHLCNLPLKVLIASNNKLVSLPEEIGHLRHLMELDVSCNEIQTIPSQIGNLEALRDLNVRRNHLVHLPEELAELPLIRLDFSCNKITTIPVCYRNLRHLQTITLDNNPLQSPPAQICIKGKVHIFKYLNIQACKIAPDLPDYDRRPLGFGSCHEELYSSRPYGALDSGFNSVDSGDKRWSGNEPTDEFSDLPLRVAEITKEQRLRRESQYQENRGSLVVTNGGVEHDLDQIDYIDSCTAEEEEAEVRQPKGPDPDSLSSQFMAYIEQRRISHEGSPVKPVAIREFQKTEDMRRYLHQNRVPAEPSSLLSLSASHNQLSHTDLELHQRREQLVERTRREAQLAALQYEEEKIRTKQIQRDAVLDFVKQKASQSPQKQHPLLDGVDGECPFPSRRSQHTDDSALCMSLSGLNQVGCAATLPHSSAFTPLKSDDRPNALLSSPATETVHHSPAYSFPAAIQRNQPQRPESFLFRAGVRAETNKGHASPLPPSAAPTTDSTDSITGQNSRQREEELELIDQLRKHIEYRLKVSLPCDLGAALTDGVVLCHLANHVRPRSVPSIHVPSPAVPKLTMAKCRRNVENFLEACRKIGVPQEQLCLPLHILEEKGLSQVAVTVQALLELAPPKQQQHQLSAV</sequence>
<protein>
    <recommendedName>
        <fullName evidence="8">DISP complex protein LRCH3</fullName>
    </recommendedName>
    <alternativeName>
        <fullName evidence="9">Leucine-rich repeat and calponin homology domain-containing protein 3</fullName>
    </alternativeName>
</protein>
<keyword id="KW-0025">Alternative splicing</keyword>
<keyword id="KW-0963">Cytoplasm</keyword>
<keyword id="KW-0433">Leucine-rich repeat</keyword>
<keyword id="KW-0597">Phosphoprotein</keyword>
<keyword id="KW-1267">Proteomics identification</keyword>
<keyword id="KW-1185">Reference proteome</keyword>
<keyword id="KW-0677">Repeat</keyword>
<dbReference type="EMBL" id="AK303521">
    <property type="protein sequence ID" value="BAG64549.1"/>
    <property type="molecule type" value="mRNA"/>
</dbReference>
<dbReference type="EMBL" id="AC055764">
    <property type="status" value="NOT_ANNOTATED_CDS"/>
    <property type="molecule type" value="Genomic_DNA"/>
</dbReference>
<dbReference type="EMBL" id="AC135893">
    <property type="status" value="NOT_ANNOTATED_CDS"/>
    <property type="molecule type" value="Genomic_DNA"/>
</dbReference>
<dbReference type="EMBL" id="AC144530">
    <property type="status" value="NOT_ANNOTATED_CDS"/>
    <property type="molecule type" value="Genomic_DNA"/>
</dbReference>
<dbReference type="EMBL" id="BC007504">
    <property type="protein sequence ID" value="AAH07504.1"/>
    <property type="molecule type" value="mRNA"/>
</dbReference>
<dbReference type="EMBL" id="BC010565">
    <property type="protein sequence ID" value="AAH10565.1"/>
    <property type="molecule type" value="mRNA"/>
</dbReference>
<dbReference type="EMBL" id="AL137527">
    <property type="protein sequence ID" value="CAB70791.1"/>
    <property type="molecule type" value="mRNA"/>
</dbReference>
<dbReference type="CCDS" id="CCDS3330.1">
    <molecule id="Q96II8-3"/>
</dbReference>
<dbReference type="CCDS" id="CCDS87193.1">
    <molecule id="Q96II8-2"/>
</dbReference>
<dbReference type="CCDS" id="CCDS93456.1">
    <molecule id="Q96II8-1"/>
</dbReference>
<dbReference type="PIR" id="T46371">
    <property type="entry name" value="T46371"/>
</dbReference>
<dbReference type="RefSeq" id="NP_001350816.1">
    <molecule id="Q96II8-2"/>
    <property type="nucleotide sequence ID" value="NM_001363887.1"/>
</dbReference>
<dbReference type="RefSeq" id="NP_001352644.1">
    <molecule id="Q96II8-1"/>
    <property type="nucleotide sequence ID" value="NM_001365715.1"/>
</dbReference>
<dbReference type="RefSeq" id="NP_116162.1">
    <molecule id="Q96II8-3"/>
    <property type="nucleotide sequence ID" value="NM_032773.4"/>
</dbReference>
<dbReference type="RefSeq" id="XP_005269419.1">
    <property type="nucleotide sequence ID" value="XM_005269362.2"/>
</dbReference>
<dbReference type="RefSeq" id="XP_006713854.1">
    <property type="nucleotide sequence ID" value="XM_006713791.3"/>
</dbReference>
<dbReference type="SMR" id="Q96II8"/>
<dbReference type="BioGRID" id="124307">
    <property type="interactions" value="122"/>
</dbReference>
<dbReference type="ComplexPortal" id="CPX-7725">
    <property type="entry name" value="DISP septin regulator complex"/>
</dbReference>
<dbReference type="FunCoup" id="Q96II8">
    <property type="interactions" value="3113"/>
</dbReference>
<dbReference type="IntAct" id="Q96II8">
    <property type="interactions" value="81"/>
</dbReference>
<dbReference type="MINT" id="Q96II8"/>
<dbReference type="STRING" id="9606.ENSP00000399751"/>
<dbReference type="iPTMnet" id="Q96II8"/>
<dbReference type="MetOSite" id="Q96II8"/>
<dbReference type="PhosphoSitePlus" id="Q96II8"/>
<dbReference type="BioMuta" id="LRCH3"/>
<dbReference type="DMDM" id="116248531"/>
<dbReference type="jPOST" id="Q96II8"/>
<dbReference type="MassIVE" id="Q96II8"/>
<dbReference type="PaxDb" id="9606-ENSP00000334375"/>
<dbReference type="PeptideAtlas" id="Q96II8"/>
<dbReference type="ProteomicsDB" id="5699"/>
<dbReference type="ProteomicsDB" id="76830">
    <molecule id="Q96II8-1"/>
</dbReference>
<dbReference type="ProteomicsDB" id="76831">
    <molecule id="Q96II8-2"/>
</dbReference>
<dbReference type="ProteomicsDB" id="76832">
    <molecule id="Q96II8-3"/>
</dbReference>
<dbReference type="Pumba" id="Q96II8"/>
<dbReference type="Antibodypedia" id="2704">
    <property type="antibodies" value="91 antibodies from 18 providers"/>
</dbReference>
<dbReference type="DNASU" id="84859"/>
<dbReference type="Ensembl" id="ENST00000334859.8">
    <molecule id="Q96II8-3"/>
    <property type="protein sequence ID" value="ENSP00000334375.4"/>
    <property type="gene ID" value="ENSG00000186001.14"/>
</dbReference>
<dbReference type="Ensembl" id="ENST00000414675.6">
    <molecule id="Q96II8-4"/>
    <property type="protein sequence ID" value="ENSP00000394965.2"/>
    <property type="gene ID" value="ENSG00000186001.14"/>
</dbReference>
<dbReference type="Ensembl" id="ENST00000425562.7">
    <molecule id="Q96II8-1"/>
    <property type="protein sequence ID" value="ENSP00000393579.2"/>
    <property type="gene ID" value="ENSG00000186001.14"/>
</dbReference>
<dbReference type="Ensembl" id="ENST00000428136.2">
    <molecule id="Q96II8-2"/>
    <property type="protein sequence ID" value="ENSP00000394763.2"/>
    <property type="gene ID" value="ENSG00000186001.14"/>
</dbReference>
<dbReference type="Ensembl" id="ENST00000438796.6">
    <molecule id="Q96II8-2"/>
    <property type="protein sequence ID" value="ENSP00000399751.2"/>
    <property type="gene ID" value="ENSG00000186001.14"/>
</dbReference>
<dbReference type="GeneID" id="84859"/>
<dbReference type="KEGG" id="hsa:84859"/>
<dbReference type="MANE-Select" id="ENST00000425562.7">
    <property type="protein sequence ID" value="ENSP00000393579.2"/>
    <property type="RefSeq nucleotide sequence ID" value="NM_001365715.1"/>
    <property type="RefSeq protein sequence ID" value="NP_001352644.1"/>
</dbReference>
<dbReference type="UCSC" id="uc003fyj.1">
    <molecule id="Q96II8-1"/>
    <property type="organism name" value="human"/>
</dbReference>
<dbReference type="AGR" id="HGNC:28637"/>
<dbReference type="CTD" id="84859"/>
<dbReference type="DisGeNET" id="84859"/>
<dbReference type="GeneCards" id="LRCH3"/>
<dbReference type="HGNC" id="HGNC:28637">
    <property type="gene designation" value="LRCH3"/>
</dbReference>
<dbReference type="HPA" id="ENSG00000186001">
    <property type="expression patterns" value="Low tissue specificity"/>
</dbReference>
<dbReference type="neXtProt" id="NX_Q96II8"/>
<dbReference type="OpenTargets" id="ENSG00000186001"/>
<dbReference type="PharmGKB" id="PA134923024"/>
<dbReference type="VEuPathDB" id="HostDB:ENSG00000186001"/>
<dbReference type="eggNOG" id="KOG0532">
    <property type="taxonomic scope" value="Eukaryota"/>
</dbReference>
<dbReference type="GeneTree" id="ENSGT00940000158330"/>
<dbReference type="HOGENOM" id="CLU_008231_2_0_1"/>
<dbReference type="InParanoid" id="Q96II8"/>
<dbReference type="OMA" id="CMLYSWI"/>
<dbReference type="OrthoDB" id="660555at2759"/>
<dbReference type="PAN-GO" id="Q96II8">
    <property type="GO annotations" value="1 GO annotation based on evolutionary models"/>
</dbReference>
<dbReference type="PhylomeDB" id="Q96II8"/>
<dbReference type="TreeFam" id="TF318428"/>
<dbReference type="PathwayCommons" id="Q96II8"/>
<dbReference type="SignaLink" id="Q96II8"/>
<dbReference type="BioGRID-ORCS" id="84859">
    <property type="hits" value="10 hits in 1153 CRISPR screens"/>
</dbReference>
<dbReference type="ChiTaRS" id="LRCH3">
    <property type="organism name" value="human"/>
</dbReference>
<dbReference type="GenomeRNAi" id="84859"/>
<dbReference type="Pharos" id="Q96II8">
    <property type="development level" value="Tdark"/>
</dbReference>
<dbReference type="PRO" id="PR:Q96II8"/>
<dbReference type="Proteomes" id="UP000005640">
    <property type="component" value="Chromosome 3"/>
</dbReference>
<dbReference type="RNAct" id="Q96II8">
    <property type="molecule type" value="protein"/>
</dbReference>
<dbReference type="Bgee" id="ENSG00000186001">
    <property type="expression patterns" value="Expressed in sural nerve and 185 other cell types or tissues"/>
</dbReference>
<dbReference type="ExpressionAtlas" id="Q96II8">
    <property type="expression patterns" value="baseline and differential"/>
</dbReference>
<dbReference type="GO" id="GO:0005737">
    <property type="term" value="C:cytoplasm"/>
    <property type="evidence" value="ECO:0000305"/>
    <property type="project" value="UniProtKB"/>
</dbReference>
<dbReference type="GO" id="GO:0005829">
    <property type="term" value="C:cytosol"/>
    <property type="evidence" value="ECO:0000314"/>
    <property type="project" value="HPA"/>
</dbReference>
<dbReference type="GO" id="GO:0032185">
    <property type="term" value="P:septin cytoskeleton organization"/>
    <property type="evidence" value="ECO:0000315"/>
    <property type="project" value="UniProtKB"/>
</dbReference>
<dbReference type="CDD" id="cd21272">
    <property type="entry name" value="CH_LRCH3"/>
    <property type="match status" value="1"/>
</dbReference>
<dbReference type="FunFam" id="1.10.418.10:FF:000021">
    <property type="entry name" value="Leucine-rich repeat and calponin homology domain-containing protein 1 isoform 3"/>
    <property type="match status" value="1"/>
</dbReference>
<dbReference type="FunFam" id="3.80.10.10:FF:000007">
    <property type="entry name" value="Leucine-rich repeat and calponin homology domain-containing protein 1 isoform 3"/>
    <property type="match status" value="1"/>
</dbReference>
<dbReference type="Gene3D" id="1.10.418.10">
    <property type="entry name" value="Calponin-like domain"/>
    <property type="match status" value="1"/>
</dbReference>
<dbReference type="Gene3D" id="3.80.10.10">
    <property type="entry name" value="Ribonuclease Inhibitor"/>
    <property type="match status" value="1"/>
</dbReference>
<dbReference type="InterPro" id="IPR001715">
    <property type="entry name" value="CH_dom"/>
</dbReference>
<dbReference type="InterPro" id="IPR036872">
    <property type="entry name" value="CH_dom_sf"/>
</dbReference>
<dbReference type="InterPro" id="IPR001611">
    <property type="entry name" value="Leu-rich_rpt"/>
</dbReference>
<dbReference type="InterPro" id="IPR003591">
    <property type="entry name" value="Leu-rich_rpt_typical-subtyp"/>
</dbReference>
<dbReference type="InterPro" id="IPR032675">
    <property type="entry name" value="LRR_dom_sf"/>
</dbReference>
<dbReference type="InterPro" id="IPR050216">
    <property type="entry name" value="LRR_domain-containing"/>
</dbReference>
<dbReference type="PANTHER" id="PTHR48051">
    <property type="match status" value="1"/>
</dbReference>
<dbReference type="PANTHER" id="PTHR48051:SF44">
    <property type="entry name" value="LEUCINE RICH REPEATS AND CALPONIN HOMOLOGY DOMAIN CONTAINING 3"/>
    <property type="match status" value="1"/>
</dbReference>
<dbReference type="Pfam" id="PF00307">
    <property type="entry name" value="CH"/>
    <property type="match status" value="1"/>
</dbReference>
<dbReference type="Pfam" id="PF13855">
    <property type="entry name" value="LRR_8"/>
    <property type="match status" value="2"/>
</dbReference>
<dbReference type="SMART" id="SM00033">
    <property type="entry name" value="CH"/>
    <property type="match status" value="1"/>
</dbReference>
<dbReference type="SMART" id="SM00364">
    <property type="entry name" value="LRR_BAC"/>
    <property type="match status" value="5"/>
</dbReference>
<dbReference type="SMART" id="SM00369">
    <property type="entry name" value="LRR_TYP"/>
    <property type="match status" value="5"/>
</dbReference>
<dbReference type="SUPFAM" id="SSF47576">
    <property type="entry name" value="Calponin-homology domain, CH-domain"/>
    <property type="match status" value="1"/>
</dbReference>
<dbReference type="SUPFAM" id="SSF52058">
    <property type="entry name" value="L domain-like"/>
    <property type="match status" value="1"/>
</dbReference>
<dbReference type="PROSITE" id="PS50021">
    <property type="entry name" value="CH"/>
    <property type="match status" value="1"/>
</dbReference>
<evidence type="ECO:0000255" key="1"/>
<evidence type="ECO:0000255" key="2">
    <source>
        <dbReference type="PROSITE-ProRule" id="PRU00044"/>
    </source>
</evidence>
<evidence type="ECO:0000256" key="3">
    <source>
        <dbReference type="SAM" id="MobiDB-lite"/>
    </source>
</evidence>
<evidence type="ECO:0000269" key="4">
    <source>
    </source>
</evidence>
<evidence type="ECO:0000303" key="5">
    <source>
    </source>
</evidence>
<evidence type="ECO:0000303" key="6">
    <source>
    </source>
</evidence>
<evidence type="ECO:0000303" key="7">
    <source>
    </source>
</evidence>
<evidence type="ECO:0000305" key="8">
    <source>
    </source>
</evidence>
<evidence type="ECO:0000312" key="9">
    <source>
        <dbReference type="HGNC" id="HGNC:28637"/>
    </source>
</evidence>
<evidence type="ECO:0007744" key="10">
    <source>
    </source>
</evidence>
<evidence type="ECO:0007744" key="11">
    <source>
    </source>
</evidence>
<evidence type="ECO:0007744" key="12">
    <source>
    </source>
</evidence>
<evidence type="ECO:0007744" key="13">
    <source>
    </source>
</evidence>
<evidence type="ECO:0007744" key="14">
    <source>
    </source>
</evidence>
<evidence type="ECO:0007744" key="15">
    <source>
    </source>
</evidence>
<name>LRCH3_HUMAN</name>
<comment type="function">
    <text evidence="4">As part of the DISP complex, may regulate the association of septins with actin and thereby regulate the actin cytoskeleton.</text>
</comment>
<comment type="subunit">
    <text evidence="4">Component of the DOCK7-induced septin displacement/DISP complex, at least composed of DOCK7, LRCH3 and MYO6.</text>
</comment>
<comment type="interaction">
    <interactant intactId="EBI-8795942">
        <id>Q96II8</id>
    </interactant>
    <interactant intactId="EBI-2433703">
        <id>Q96N67</id>
        <label>DOCK7</label>
    </interactant>
    <organismsDiffer>false</organismsDiffer>
    <experiments>13</experiments>
</comment>
<comment type="interaction">
    <interactant intactId="EBI-8795942">
        <id>Q96II8</id>
    </interactant>
    <interactant intactId="EBI-10174653">
        <id>Q8NF50-2</id>
        <label>DOCK8</label>
    </interactant>
    <organismsDiffer>false</organismsDiffer>
    <experiments>3</experiments>
</comment>
<comment type="interaction">
    <interactant intactId="EBI-8795942">
        <id>Q96II8</id>
    </interactant>
    <interactant intactId="EBI-350606">
        <id>Q9UM54</id>
        <label>MYO6</label>
    </interactant>
    <organismsDiffer>false</organismsDiffer>
    <experiments>4</experiments>
</comment>
<comment type="interaction">
    <interactant intactId="EBI-8795942">
        <id>Q96II8</id>
    </interactant>
    <interactant intactId="EBI-15706115">
        <id>Q9UM54-1</id>
        <label>MYO6</label>
    </interactant>
    <organismsDiffer>false</organismsDiffer>
    <experiments>3</experiments>
</comment>
<comment type="interaction">
    <interactant intactId="EBI-17658306">
        <id>Q96II8-3</id>
    </interactant>
    <interactant intactId="EBI-742953">
        <id>Q9BY27</id>
        <label>DGCR6L</label>
    </interactant>
    <organismsDiffer>false</organismsDiffer>
    <experiments>3</experiments>
</comment>
<comment type="interaction">
    <interactant intactId="EBI-17658306">
        <id>Q96II8-3</id>
    </interactant>
    <interactant intactId="EBI-9379658">
        <id>Q86X45</id>
        <label>DNAAF11</label>
    </interactant>
    <organismsDiffer>false</organismsDiffer>
    <experiments>3</experiments>
</comment>
<comment type="interaction">
    <interactant intactId="EBI-17658306">
        <id>Q96II8-3</id>
    </interactant>
    <interactant intactId="EBI-357318">
        <id>Q9NWS0</id>
        <label>PIH1D1</label>
    </interactant>
    <organismsDiffer>false</organismsDiffer>
    <experiments>3</experiments>
</comment>
<comment type="subcellular location">
    <subcellularLocation>
        <location evidence="8">Cytoplasm</location>
    </subcellularLocation>
</comment>
<comment type="alternative products">
    <event type="alternative splicing"/>
    <isoform>
        <id>Q96II8-1</id>
        <name>1</name>
        <sequence type="displayed"/>
    </isoform>
    <isoform>
        <id>Q96II8-2</id>
        <name>2</name>
        <sequence type="described" ref="VSP_021044"/>
    </isoform>
    <isoform>
        <id>Q96II8-3</id>
        <name>3</name>
        <sequence type="described" ref="VSP_021043"/>
    </isoform>
    <isoform>
        <id>Q96II8-4</id>
        <name>4</name>
        <sequence type="described" ref="VSP_057212 VSP_057213"/>
    </isoform>
</comment>
<comment type="caution">
    <text evidence="8">Predicted to contain a signal peptide and to be secreted. However, this is not consistent with an interaction with DOCK7 and MYO6 and the suggested function in cytoskeleton organization.</text>
</comment>
<reference key="1">
    <citation type="journal article" date="2004" name="Nat. Genet.">
        <title>Complete sequencing and characterization of 21,243 full-length human cDNAs.</title>
        <authorList>
            <person name="Ota T."/>
            <person name="Suzuki Y."/>
            <person name="Nishikawa T."/>
            <person name="Otsuki T."/>
            <person name="Sugiyama T."/>
            <person name="Irie R."/>
            <person name="Wakamatsu A."/>
            <person name="Hayashi K."/>
            <person name="Sato H."/>
            <person name="Nagai K."/>
            <person name="Kimura K."/>
            <person name="Makita H."/>
            <person name="Sekine M."/>
            <person name="Obayashi M."/>
            <person name="Nishi T."/>
            <person name="Shibahara T."/>
            <person name="Tanaka T."/>
            <person name="Ishii S."/>
            <person name="Yamamoto J."/>
            <person name="Saito K."/>
            <person name="Kawai Y."/>
            <person name="Isono Y."/>
            <person name="Nakamura Y."/>
            <person name="Nagahari K."/>
            <person name="Murakami K."/>
            <person name="Yasuda T."/>
            <person name="Iwayanagi T."/>
            <person name="Wagatsuma M."/>
            <person name="Shiratori A."/>
            <person name="Sudo H."/>
            <person name="Hosoiri T."/>
            <person name="Kaku Y."/>
            <person name="Kodaira H."/>
            <person name="Kondo H."/>
            <person name="Sugawara M."/>
            <person name="Takahashi M."/>
            <person name="Kanda K."/>
            <person name="Yokoi T."/>
            <person name="Furuya T."/>
            <person name="Kikkawa E."/>
            <person name="Omura Y."/>
            <person name="Abe K."/>
            <person name="Kamihara K."/>
            <person name="Katsuta N."/>
            <person name="Sato K."/>
            <person name="Tanikawa M."/>
            <person name="Yamazaki M."/>
            <person name="Ninomiya K."/>
            <person name="Ishibashi T."/>
            <person name="Yamashita H."/>
            <person name="Murakawa K."/>
            <person name="Fujimori K."/>
            <person name="Tanai H."/>
            <person name="Kimata M."/>
            <person name="Watanabe M."/>
            <person name="Hiraoka S."/>
            <person name="Chiba Y."/>
            <person name="Ishida S."/>
            <person name="Ono Y."/>
            <person name="Takiguchi S."/>
            <person name="Watanabe S."/>
            <person name="Yosida M."/>
            <person name="Hotuta T."/>
            <person name="Kusano J."/>
            <person name="Kanehori K."/>
            <person name="Takahashi-Fujii A."/>
            <person name="Hara H."/>
            <person name="Tanase T.-O."/>
            <person name="Nomura Y."/>
            <person name="Togiya S."/>
            <person name="Komai F."/>
            <person name="Hara R."/>
            <person name="Takeuchi K."/>
            <person name="Arita M."/>
            <person name="Imose N."/>
            <person name="Musashino K."/>
            <person name="Yuuki H."/>
            <person name="Oshima A."/>
            <person name="Sasaki N."/>
            <person name="Aotsuka S."/>
            <person name="Yoshikawa Y."/>
            <person name="Matsunawa H."/>
            <person name="Ichihara T."/>
            <person name="Shiohata N."/>
            <person name="Sano S."/>
            <person name="Moriya S."/>
            <person name="Momiyama H."/>
            <person name="Satoh N."/>
            <person name="Takami S."/>
            <person name="Terashima Y."/>
            <person name="Suzuki O."/>
            <person name="Nakagawa S."/>
            <person name="Senoh A."/>
            <person name="Mizoguchi H."/>
            <person name="Goto Y."/>
            <person name="Shimizu F."/>
            <person name="Wakebe H."/>
            <person name="Hishigaki H."/>
            <person name="Watanabe T."/>
            <person name="Sugiyama A."/>
            <person name="Takemoto M."/>
            <person name="Kawakami B."/>
            <person name="Yamazaki M."/>
            <person name="Watanabe K."/>
            <person name="Kumagai A."/>
            <person name="Itakura S."/>
            <person name="Fukuzumi Y."/>
            <person name="Fujimori Y."/>
            <person name="Komiyama M."/>
            <person name="Tashiro H."/>
            <person name="Tanigami A."/>
            <person name="Fujiwara T."/>
            <person name="Ono T."/>
            <person name="Yamada K."/>
            <person name="Fujii Y."/>
            <person name="Ozaki K."/>
            <person name="Hirao M."/>
            <person name="Ohmori Y."/>
            <person name="Kawabata A."/>
            <person name="Hikiji T."/>
            <person name="Kobatake N."/>
            <person name="Inagaki H."/>
            <person name="Ikema Y."/>
            <person name="Okamoto S."/>
            <person name="Okitani R."/>
            <person name="Kawakami T."/>
            <person name="Noguchi S."/>
            <person name="Itoh T."/>
            <person name="Shigeta K."/>
            <person name="Senba T."/>
            <person name="Matsumura K."/>
            <person name="Nakajima Y."/>
            <person name="Mizuno T."/>
            <person name="Morinaga M."/>
            <person name="Sasaki M."/>
            <person name="Togashi T."/>
            <person name="Oyama M."/>
            <person name="Hata H."/>
            <person name="Watanabe M."/>
            <person name="Komatsu T."/>
            <person name="Mizushima-Sugano J."/>
            <person name="Satoh T."/>
            <person name="Shirai Y."/>
            <person name="Takahashi Y."/>
            <person name="Nakagawa K."/>
            <person name="Okumura K."/>
            <person name="Nagase T."/>
            <person name="Nomura N."/>
            <person name="Kikuchi H."/>
            <person name="Masuho Y."/>
            <person name="Yamashita R."/>
            <person name="Nakai K."/>
            <person name="Yada T."/>
            <person name="Nakamura Y."/>
            <person name="Ohara O."/>
            <person name="Isogai T."/>
            <person name="Sugano S."/>
        </authorList>
    </citation>
    <scope>NUCLEOTIDE SEQUENCE [LARGE SCALE MRNA] (ISOFORM 4)</scope>
    <source>
        <tissue>Thymus</tissue>
    </source>
</reference>
<reference key="2">
    <citation type="journal article" date="2006" name="Nature">
        <title>The DNA sequence, annotation and analysis of human chromosome 3.</title>
        <authorList>
            <person name="Muzny D.M."/>
            <person name="Scherer S.E."/>
            <person name="Kaul R."/>
            <person name="Wang J."/>
            <person name="Yu J."/>
            <person name="Sudbrak R."/>
            <person name="Buhay C.J."/>
            <person name="Chen R."/>
            <person name="Cree A."/>
            <person name="Ding Y."/>
            <person name="Dugan-Rocha S."/>
            <person name="Gill R."/>
            <person name="Gunaratne P."/>
            <person name="Harris R.A."/>
            <person name="Hawes A.C."/>
            <person name="Hernandez J."/>
            <person name="Hodgson A.V."/>
            <person name="Hume J."/>
            <person name="Jackson A."/>
            <person name="Khan Z.M."/>
            <person name="Kovar-Smith C."/>
            <person name="Lewis L.R."/>
            <person name="Lozado R.J."/>
            <person name="Metzker M.L."/>
            <person name="Milosavljevic A."/>
            <person name="Miner G.R."/>
            <person name="Morgan M.B."/>
            <person name="Nazareth L.V."/>
            <person name="Scott G."/>
            <person name="Sodergren E."/>
            <person name="Song X.-Z."/>
            <person name="Steffen D."/>
            <person name="Wei S."/>
            <person name="Wheeler D.A."/>
            <person name="Wright M.W."/>
            <person name="Worley K.C."/>
            <person name="Yuan Y."/>
            <person name="Zhang Z."/>
            <person name="Adams C.Q."/>
            <person name="Ansari-Lari M.A."/>
            <person name="Ayele M."/>
            <person name="Brown M.J."/>
            <person name="Chen G."/>
            <person name="Chen Z."/>
            <person name="Clendenning J."/>
            <person name="Clerc-Blankenburg K.P."/>
            <person name="Chen R."/>
            <person name="Chen Z."/>
            <person name="Davis C."/>
            <person name="Delgado O."/>
            <person name="Dinh H.H."/>
            <person name="Dong W."/>
            <person name="Draper H."/>
            <person name="Ernst S."/>
            <person name="Fu G."/>
            <person name="Gonzalez-Garay M.L."/>
            <person name="Garcia D.K."/>
            <person name="Gillett W."/>
            <person name="Gu J."/>
            <person name="Hao B."/>
            <person name="Haugen E."/>
            <person name="Havlak P."/>
            <person name="He X."/>
            <person name="Hennig S."/>
            <person name="Hu S."/>
            <person name="Huang W."/>
            <person name="Jackson L.R."/>
            <person name="Jacob L.S."/>
            <person name="Kelly S.H."/>
            <person name="Kube M."/>
            <person name="Levy R."/>
            <person name="Li Z."/>
            <person name="Liu B."/>
            <person name="Liu J."/>
            <person name="Liu W."/>
            <person name="Lu J."/>
            <person name="Maheshwari M."/>
            <person name="Nguyen B.-V."/>
            <person name="Okwuonu G.O."/>
            <person name="Palmeiri A."/>
            <person name="Pasternak S."/>
            <person name="Perez L.M."/>
            <person name="Phelps K.A."/>
            <person name="Plopper F.J."/>
            <person name="Qiang B."/>
            <person name="Raymond C."/>
            <person name="Rodriguez R."/>
            <person name="Saenphimmachak C."/>
            <person name="Santibanez J."/>
            <person name="Shen H."/>
            <person name="Shen Y."/>
            <person name="Subramanian S."/>
            <person name="Tabor P.E."/>
            <person name="Verduzco D."/>
            <person name="Waldron L."/>
            <person name="Wang J."/>
            <person name="Wang J."/>
            <person name="Wang Q."/>
            <person name="Williams G.A."/>
            <person name="Wong G.K.-S."/>
            <person name="Yao Z."/>
            <person name="Zhang J."/>
            <person name="Zhang X."/>
            <person name="Zhao G."/>
            <person name="Zhou J."/>
            <person name="Zhou Y."/>
            <person name="Nelson D."/>
            <person name="Lehrach H."/>
            <person name="Reinhardt R."/>
            <person name="Naylor S.L."/>
            <person name="Yang H."/>
            <person name="Olson M."/>
            <person name="Weinstock G."/>
            <person name="Gibbs R.A."/>
        </authorList>
    </citation>
    <scope>NUCLEOTIDE SEQUENCE [LARGE SCALE GENOMIC DNA]</scope>
</reference>
<reference key="3">
    <citation type="journal article" date="2004" name="Genome Res.">
        <title>The status, quality, and expansion of the NIH full-length cDNA project: the Mammalian Gene Collection (MGC).</title>
        <authorList>
            <consortium name="The MGC Project Team"/>
        </authorList>
    </citation>
    <scope>NUCLEOTIDE SEQUENCE [LARGE SCALE MRNA] (ISOFORM 1)</scope>
    <scope>NUCLEOTIDE SEQUENCE [LARGE SCALE MRNA] OF 575-777 (ISOFORM 3)</scope>
    <source>
        <tissue>Brain</tissue>
        <tissue>Muscle</tissue>
    </source>
</reference>
<reference key="4">
    <citation type="journal article" date="2007" name="BMC Genomics">
        <title>The full-ORF clone resource of the German cDNA consortium.</title>
        <authorList>
            <person name="Bechtel S."/>
            <person name="Rosenfelder H."/>
            <person name="Duda A."/>
            <person name="Schmidt C.P."/>
            <person name="Ernst U."/>
            <person name="Wellenreuther R."/>
            <person name="Mehrle A."/>
            <person name="Schuster C."/>
            <person name="Bahr A."/>
            <person name="Bloecker H."/>
            <person name="Heubner D."/>
            <person name="Hoerlein A."/>
            <person name="Michel G."/>
            <person name="Wedler H."/>
            <person name="Koehrer K."/>
            <person name="Ottenwaelder B."/>
            <person name="Poustka A."/>
            <person name="Wiemann S."/>
            <person name="Schupp I."/>
        </authorList>
    </citation>
    <scope>NUCLEOTIDE SEQUENCE [LARGE SCALE MRNA] OF 624-777 (ISOFORM 2)</scope>
    <source>
        <tissue>Testis</tissue>
    </source>
</reference>
<reference key="5">
    <citation type="journal article" date="2008" name="J. Proteome Res.">
        <title>Phosphorylation analysis of primary human T lymphocytes using sequential IMAC and titanium oxide enrichment.</title>
        <authorList>
            <person name="Carrascal M."/>
            <person name="Ovelleiro D."/>
            <person name="Casas V."/>
            <person name="Gay M."/>
            <person name="Abian J."/>
        </authorList>
    </citation>
    <scope>PHOSPHORYLATION [LARGE SCALE ANALYSIS] AT SER-415</scope>
    <scope>IDENTIFICATION BY MASS SPECTROMETRY [LARGE SCALE ANALYSIS]</scope>
    <source>
        <tissue>T-cell</tissue>
    </source>
</reference>
<reference key="6">
    <citation type="journal article" date="2008" name="Proc. Natl. Acad. Sci. U.S.A.">
        <title>A quantitative atlas of mitotic phosphorylation.</title>
        <authorList>
            <person name="Dephoure N."/>
            <person name="Zhou C."/>
            <person name="Villen J."/>
            <person name="Beausoleil S.A."/>
            <person name="Bakalarski C.E."/>
            <person name="Elledge S.J."/>
            <person name="Gygi S.P."/>
        </authorList>
    </citation>
    <scope>PHOSPHORYLATION [LARGE SCALE ANALYSIS] AT SER-324</scope>
    <scope>IDENTIFICATION BY MASS SPECTROMETRY [LARGE SCALE ANALYSIS]</scope>
    <source>
        <tissue>Cervix carcinoma</tissue>
    </source>
</reference>
<reference key="7">
    <citation type="journal article" date="2009" name="Sci. Signal.">
        <title>Quantitative phosphoproteomic analysis of T cell receptor signaling reveals system-wide modulation of protein-protein interactions.</title>
        <authorList>
            <person name="Mayya V."/>
            <person name="Lundgren D.H."/>
            <person name="Hwang S.-I."/>
            <person name="Rezaul K."/>
            <person name="Wu L."/>
            <person name="Eng J.K."/>
            <person name="Rodionov V."/>
            <person name="Han D.K."/>
        </authorList>
    </citation>
    <scope>PHOSPHORYLATION [LARGE SCALE ANALYSIS] AT SER-324</scope>
    <scope>IDENTIFICATION BY MASS SPECTROMETRY [LARGE SCALE ANALYSIS]</scope>
    <source>
        <tissue>Leukemic T-cell</tissue>
    </source>
</reference>
<reference key="8">
    <citation type="journal article" date="2010" name="Sci. Signal.">
        <title>Quantitative phosphoproteomics reveals widespread full phosphorylation site occupancy during mitosis.</title>
        <authorList>
            <person name="Olsen J.V."/>
            <person name="Vermeulen M."/>
            <person name="Santamaria A."/>
            <person name="Kumar C."/>
            <person name="Miller M.L."/>
            <person name="Jensen L.J."/>
            <person name="Gnad F."/>
            <person name="Cox J."/>
            <person name="Jensen T.S."/>
            <person name="Nigg E.A."/>
            <person name="Brunak S."/>
            <person name="Mann M."/>
        </authorList>
    </citation>
    <scope>PHOSPHORYLATION [LARGE SCALE ANALYSIS] AT SER-324</scope>
    <scope>IDENTIFICATION BY MASS SPECTROMETRY [LARGE SCALE ANALYSIS]</scope>
    <source>
        <tissue>Cervix carcinoma</tissue>
    </source>
</reference>
<reference key="9">
    <citation type="journal article" date="2013" name="J. Proteome Res.">
        <title>Toward a comprehensive characterization of a human cancer cell phosphoproteome.</title>
        <authorList>
            <person name="Zhou H."/>
            <person name="Di Palma S."/>
            <person name="Preisinger C."/>
            <person name="Peng M."/>
            <person name="Polat A.N."/>
            <person name="Heck A.J."/>
            <person name="Mohammed S."/>
        </authorList>
    </citation>
    <scope>PHOSPHORYLATION [LARGE SCALE ANALYSIS] AT SER-324; SER-415; SER-419; SER-611 AND SER-628</scope>
    <scope>IDENTIFICATION BY MASS SPECTROMETRY [LARGE SCALE ANALYSIS]</scope>
    <source>
        <tissue>Cervix carcinoma</tissue>
        <tissue>Erythroleukemia</tissue>
    </source>
</reference>
<reference key="10">
    <citation type="journal article" date="2014" name="J. Proteomics">
        <title>An enzyme assisted RP-RPLC approach for in-depth analysis of human liver phosphoproteome.</title>
        <authorList>
            <person name="Bian Y."/>
            <person name="Song C."/>
            <person name="Cheng K."/>
            <person name="Dong M."/>
            <person name="Wang F."/>
            <person name="Huang J."/>
            <person name="Sun D."/>
            <person name="Wang L."/>
            <person name="Ye M."/>
            <person name="Zou H."/>
        </authorList>
    </citation>
    <scope>PHOSPHORYLATION [LARGE SCALE ANALYSIS] AT SER-415</scope>
    <scope>IDENTIFICATION BY MASS SPECTROMETRY [LARGE SCALE ANALYSIS]</scope>
    <source>
        <tissue>Liver</tissue>
    </source>
</reference>
<reference key="11">
    <citation type="journal article" date="2018" name="EMBO Rep.">
        <title>The MYO6 interactome reveals adaptor complexes coordinating early endosome and cytoskeletal dynamics.</title>
        <authorList>
            <person name="O'Loughlin T."/>
            <person name="Masters T.A."/>
            <person name="Buss F."/>
        </authorList>
    </citation>
    <scope>FUNCTION</scope>
    <scope>IDENTIFICATION IN DISP COMPLEX</scope>
    <scope>SUBCELLULAR LOCATION</scope>
    <scope>CAUTION</scope>
    <scope>REGION</scope>
</reference>
<gene>
    <name evidence="9" type="primary">LRCH3</name>
</gene>
<feature type="chain" id="PRO_0000253484" description="DISP complex protein LRCH3">
    <location>
        <begin position="1"/>
        <end position="777"/>
    </location>
</feature>
<feature type="repeat" description="LRR 1" evidence="1">
    <location>
        <begin position="56"/>
        <end position="79"/>
    </location>
</feature>
<feature type="repeat" description="LRR 2" evidence="1">
    <location>
        <begin position="81"/>
        <end position="104"/>
    </location>
</feature>
<feature type="repeat" description="LRR 3" evidence="1">
    <location>
        <begin position="105"/>
        <end position="127"/>
    </location>
</feature>
<feature type="repeat" description="LRR 4" evidence="1">
    <location>
        <begin position="128"/>
        <end position="150"/>
    </location>
</feature>
<feature type="repeat" description="LRR 5" evidence="1">
    <location>
        <begin position="152"/>
        <end position="172"/>
    </location>
</feature>
<feature type="repeat" description="LRR 6" evidence="1">
    <location>
        <begin position="173"/>
        <end position="195"/>
    </location>
</feature>
<feature type="repeat" description="LRR 7" evidence="1">
    <location>
        <begin position="196"/>
        <end position="218"/>
    </location>
</feature>
<feature type="repeat" description="LRR 8" evidence="1">
    <location>
        <begin position="220"/>
        <end position="239"/>
    </location>
</feature>
<feature type="repeat" description="LRR 9" evidence="1">
    <location>
        <begin position="240"/>
        <end position="264"/>
    </location>
</feature>
<feature type="repeat" description="LRR 10" evidence="1">
    <location>
        <begin position="266"/>
        <end position="290"/>
    </location>
</feature>
<feature type="domain" description="Calponin-homology (CH)" evidence="2">
    <location>
        <begin position="652"/>
        <end position="765"/>
    </location>
</feature>
<feature type="region of interest" description="Mediates interaction with DOCK7" evidence="4">
    <location>
        <begin position="56"/>
        <end position="290"/>
    </location>
</feature>
<feature type="region of interest" description="Mediates direct interaction with MYO6" evidence="4">
    <location>
        <begin position="382"/>
        <end position="648"/>
    </location>
</feature>
<feature type="region of interest" description="Disordered" evidence="3">
    <location>
        <begin position="568"/>
        <end position="590"/>
    </location>
</feature>
<feature type="region of interest" description="Disordered" evidence="3">
    <location>
        <begin position="621"/>
        <end position="653"/>
    </location>
</feature>
<feature type="compositionally biased region" description="Low complexity" evidence="3">
    <location>
        <begin position="635"/>
        <end position="645"/>
    </location>
</feature>
<feature type="modified residue" description="Phosphoserine" evidence="10 12 13 14">
    <location>
        <position position="324"/>
    </location>
</feature>
<feature type="modified residue" description="Phosphoserine" evidence="11 14 15">
    <location>
        <position position="415"/>
    </location>
</feature>
<feature type="modified residue" description="Phosphoserine" evidence="14">
    <location>
        <position position="419"/>
    </location>
</feature>
<feature type="modified residue" description="Phosphoserine" evidence="14">
    <location>
        <position position="611"/>
    </location>
</feature>
<feature type="modified residue" description="Phosphoserine" evidence="14">
    <location>
        <position position="628"/>
    </location>
</feature>
<feature type="splice variant" id="VSP_057212" description="In isoform 4." evidence="5">
    <location>
        <begin position="389"/>
        <end position="416"/>
    </location>
</feature>
<feature type="splice variant" id="VSP_057213" description="In isoform 4." evidence="5">
    <location>
        <begin position="549"/>
        <end position="572"/>
    </location>
</feature>
<feature type="splice variant" id="VSP_021043" description="In isoform 3." evidence="6">
    <original>PKLTMAKCRRNVENFLEACRKIGVPQEQLCLPLHILEEKGLSQVAVTVQALLELAPPKQQQHQLSAV</original>
    <variation>VS</variation>
    <location>
        <begin position="711"/>
        <end position="777"/>
    </location>
</feature>
<feature type="splice variant" id="VSP_021044" description="In isoform 2." evidence="7">
    <original>EQLCLPLHILEEKGLSQVAVTVQALLELAPPKQQQHQLSAV</original>
    <variation>DNLCSPSDILQLNLSVKRTVETLLSLGAHSEESSFVCLSLQLLGFVAFYCTVMLTLCVLYYWLFPAR</variation>
    <location>
        <begin position="737"/>
        <end position="777"/>
    </location>
</feature>
<feature type="sequence variant" id="VAR_056931" description="In dbSNP:rs36078463.">
    <original>P</original>
    <variation>L</variation>
    <location>
        <position position="522"/>
    </location>
</feature>
<proteinExistence type="evidence at protein level"/>
<accession>Q96II8</accession>
<accession>B4E0T7</accession>
<accession>Q96FP9</accession>
<accession>Q9NT52</accession>
<organism>
    <name type="scientific">Homo sapiens</name>
    <name type="common">Human</name>
    <dbReference type="NCBI Taxonomy" id="9606"/>
    <lineage>
        <taxon>Eukaryota</taxon>
        <taxon>Metazoa</taxon>
        <taxon>Chordata</taxon>
        <taxon>Craniata</taxon>
        <taxon>Vertebrata</taxon>
        <taxon>Euteleostomi</taxon>
        <taxon>Mammalia</taxon>
        <taxon>Eutheria</taxon>
        <taxon>Euarchontoglires</taxon>
        <taxon>Primates</taxon>
        <taxon>Haplorrhini</taxon>
        <taxon>Catarrhini</taxon>
        <taxon>Hominidae</taxon>
        <taxon>Homo</taxon>
    </lineage>
</organism>